<organism>
    <name type="scientific">Parabacteroides distasonis (strain ATCC 8503 / DSM 20701 / CIP 104284 / JCM 5825 / NCTC 11152)</name>
    <dbReference type="NCBI Taxonomy" id="435591"/>
    <lineage>
        <taxon>Bacteria</taxon>
        <taxon>Pseudomonadati</taxon>
        <taxon>Bacteroidota</taxon>
        <taxon>Bacteroidia</taxon>
        <taxon>Bacteroidales</taxon>
        <taxon>Tannerellaceae</taxon>
        <taxon>Parabacteroides</taxon>
    </lineage>
</organism>
<evidence type="ECO:0000255" key="1">
    <source>
        <dbReference type="HAMAP-Rule" id="MF_00191"/>
    </source>
</evidence>
<sequence length="290" mass="32527">MIEVEIDKDSGFCFGVVTAIESAERELGNTDTLYCLGDIVHNSLEVERLEHMGLHTIDHEGLSRLRDRKVLLRAHGEPPSTYALAKRNNITIIDATCPVVLRLQRKIHKCYQETRANNTQLVIYGKKGHAEVNGLVGQTEGTAIVIEKIEDLDRLDFTRAISLFSQTTKSLDGFKAVVAEIKQRMAEGVEFNYYDTICRQVANRLPNIKAFASSHDWVYFVAGRKSSNGKMLFEECRKANPNTLFISEVSEITEPLPEGVRRVGVCGATSTPKWLMEEVAVRIKELNASE</sequence>
<comment type="function">
    <text evidence="1">Catalyzes the conversion of 1-hydroxy-2-methyl-2-(E)-butenyl 4-diphosphate (HMBPP) into a mixture of isopentenyl diphosphate (IPP) and dimethylallyl diphosphate (DMAPP). Acts in the terminal step of the DOXP/MEP pathway for isoprenoid precursor biosynthesis.</text>
</comment>
<comment type="catalytic activity">
    <reaction evidence="1">
        <text>isopentenyl diphosphate + 2 oxidized [2Fe-2S]-[ferredoxin] + H2O = (2E)-4-hydroxy-3-methylbut-2-enyl diphosphate + 2 reduced [2Fe-2S]-[ferredoxin] + 2 H(+)</text>
        <dbReference type="Rhea" id="RHEA:24488"/>
        <dbReference type="Rhea" id="RHEA-COMP:10000"/>
        <dbReference type="Rhea" id="RHEA-COMP:10001"/>
        <dbReference type="ChEBI" id="CHEBI:15377"/>
        <dbReference type="ChEBI" id="CHEBI:15378"/>
        <dbReference type="ChEBI" id="CHEBI:33737"/>
        <dbReference type="ChEBI" id="CHEBI:33738"/>
        <dbReference type="ChEBI" id="CHEBI:128753"/>
        <dbReference type="ChEBI" id="CHEBI:128769"/>
        <dbReference type="EC" id="1.17.7.4"/>
    </reaction>
</comment>
<comment type="catalytic activity">
    <reaction evidence="1">
        <text>dimethylallyl diphosphate + 2 oxidized [2Fe-2S]-[ferredoxin] + H2O = (2E)-4-hydroxy-3-methylbut-2-enyl diphosphate + 2 reduced [2Fe-2S]-[ferredoxin] + 2 H(+)</text>
        <dbReference type="Rhea" id="RHEA:24825"/>
        <dbReference type="Rhea" id="RHEA-COMP:10000"/>
        <dbReference type="Rhea" id="RHEA-COMP:10001"/>
        <dbReference type="ChEBI" id="CHEBI:15377"/>
        <dbReference type="ChEBI" id="CHEBI:15378"/>
        <dbReference type="ChEBI" id="CHEBI:33737"/>
        <dbReference type="ChEBI" id="CHEBI:33738"/>
        <dbReference type="ChEBI" id="CHEBI:57623"/>
        <dbReference type="ChEBI" id="CHEBI:128753"/>
        <dbReference type="EC" id="1.17.7.4"/>
    </reaction>
</comment>
<comment type="cofactor">
    <cofactor evidence="1">
        <name>[4Fe-4S] cluster</name>
        <dbReference type="ChEBI" id="CHEBI:49883"/>
    </cofactor>
    <text evidence="1">Binds 1 [4Fe-4S] cluster per subunit.</text>
</comment>
<comment type="pathway">
    <text evidence="1">Isoprenoid biosynthesis; dimethylallyl diphosphate biosynthesis; dimethylallyl diphosphate from (2E)-4-hydroxy-3-methylbutenyl diphosphate: step 1/1.</text>
</comment>
<comment type="pathway">
    <text evidence="1">Isoprenoid biosynthesis; isopentenyl diphosphate biosynthesis via DXP pathway; isopentenyl diphosphate from 1-deoxy-D-xylulose 5-phosphate: step 6/6.</text>
</comment>
<comment type="similarity">
    <text evidence="1">Belongs to the IspH family.</text>
</comment>
<proteinExistence type="inferred from homology"/>
<accession>A6LIB3</accession>
<protein>
    <recommendedName>
        <fullName evidence="1">4-hydroxy-3-methylbut-2-enyl diphosphate reductase</fullName>
        <shortName evidence="1">HMBPP reductase</shortName>
        <ecNumber evidence="1">1.17.7.4</ecNumber>
    </recommendedName>
</protein>
<name>ISPH_PARD8</name>
<feature type="chain" id="PRO_1000021145" description="4-hydroxy-3-methylbut-2-enyl diphosphate reductase">
    <location>
        <begin position="1"/>
        <end position="290"/>
    </location>
</feature>
<feature type="active site" description="Proton donor" evidence="1">
    <location>
        <position position="131"/>
    </location>
</feature>
<feature type="binding site" evidence="1">
    <location>
        <position position="13"/>
    </location>
    <ligand>
        <name>[4Fe-4S] cluster</name>
        <dbReference type="ChEBI" id="CHEBI:49883"/>
    </ligand>
</feature>
<feature type="binding site" evidence="1">
    <location>
        <position position="41"/>
    </location>
    <ligand>
        <name>(2E)-4-hydroxy-3-methylbut-2-enyl diphosphate</name>
        <dbReference type="ChEBI" id="CHEBI:128753"/>
    </ligand>
</feature>
<feature type="binding site" evidence="1">
    <location>
        <position position="41"/>
    </location>
    <ligand>
        <name>dimethylallyl diphosphate</name>
        <dbReference type="ChEBI" id="CHEBI:57623"/>
    </ligand>
</feature>
<feature type="binding site" evidence="1">
    <location>
        <position position="41"/>
    </location>
    <ligand>
        <name>isopentenyl diphosphate</name>
        <dbReference type="ChEBI" id="CHEBI:128769"/>
    </ligand>
</feature>
<feature type="binding site" evidence="1">
    <location>
        <position position="75"/>
    </location>
    <ligand>
        <name>(2E)-4-hydroxy-3-methylbut-2-enyl diphosphate</name>
        <dbReference type="ChEBI" id="CHEBI:128753"/>
    </ligand>
</feature>
<feature type="binding site" evidence="1">
    <location>
        <position position="75"/>
    </location>
    <ligand>
        <name>dimethylallyl diphosphate</name>
        <dbReference type="ChEBI" id="CHEBI:57623"/>
    </ligand>
</feature>
<feature type="binding site" evidence="1">
    <location>
        <position position="75"/>
    </location>
    <ligand>
        <name>isopentenyl diphosphate</name>
        <dbReference type="ChEBI" id="CHEBI:128769"/>
    </ligand>
</feature>
<feature type="binding site" evidence="1">
    <location>
        <position position="97"/>
    </location>
    <ligand>
        <name>[4Fe-4S] cluster</name>
        <dbReference type="ChEBI" id="CHEBI:49883"/>
    </ligand>
</feature>
<feature type="binding site" evidence="1">
    <location>
        <position position="129"/>
    </location>
    <ligand>
        <name>(2E)-4-hydroxy-3-methylbut-2-enyl diphosphate</name>
        <dbReference type="ChEBI" id="CHEBI:128753"/>
    </ligand>
</feature>
<feature type="binding site" evidence="1">
    <location>
        <position position="129"/>
    </location>
    <ligand>
        <name>dimethylallyl diphosphate</name>
        <dbReference type="ChEBI" id="CHEBI:57623"/>
    </ligand>
</feature>
<feature type="binding site" evidence="1">
    <location>
        <position position="129"/>
    </location>
    <ligand>
        <name>isopentenyl diphosphate</name>
        <dbReference type="ChEBI" id="CHEBI:128769"/>
    </ligand>
</feature>
<feature type="binding site" evidence="1">
    <location>
        <position position="167"/>
    </location>
    <ligand>
        <name>(2E)-4-hydroxy-3-methylbut-2-enyl diphosphate</name>
        <dbReference type="ChEBI" id="CHEBI:128753"/>
    </ligand>
</feature>
<feature type="binding site" evidence="1">
    <location>
        <position position="198"/>
    </location>
    <ligand>
        <name>[4Fe-4S] cluster</name>
        <dbReference type="ChEBI" id="CHEBI:49883"/>
    </ligand>
</feature>
<feature type="binding site" evidence="1">
    <location>
        <position position="226"/>
    </location>
    <ligand>
        <name>(2E)-4-hydroxy-3-methylbut-2-enyl diphosphate</name>
        <dbReference type="ChEBI" id="CHEBI:128753"/>
    </ligand>
</feature>
<feature type="binding site" evidence="1">
    <location>
        <position position="226"/>
    </location>
    <ligand>
        <name>dimethylallyl diphosphate</name>
        <dbReference type="ChEBI" id="CHEBI:57623"/>
    </ligand>
</feature>
<feature type="binding site" evidence="1">
    <location>
        <position position="226"/>
    </location>
    <ligand>
        <name>isopentenyl diphosphate</name>
        <dbReference type="ChEBI" id="CHEBI:128769"/>
    </ligand>
</feature>
<feature type="binding site" evidence="1">
    <location>
        <position position="227"/>
    </location>
    <ligand>
        <name>(2E)-4-hydroxy-3-methylbut-2-enyl diphosphate</name>
        <dbReference type="ChEBI" id="CHEBI:128753"/>
    </ligand>
</feature>
<feature type="binding site" evidence="1">
    <location>
        <position position="227"/>
    </location>
    <ligand>
        <name>dimethylallyl diphosphate</name>
        <dbReference type="ChEBI" id="CHEBI:57623"/>
    </ligand>
</feature>
<feature type="binding site" evidence="1">
    <location>
        <position position="227"/>
    </location>
    <ligand>
        <name>isopentenyl diphosphate</name>
        <dbReference type="ChEBI" id="CHEBI:128769"/>
    </ligand>
</feature>
<feature type="binding site" evidence="1">
    <location>
        <position position="228"/>
    </location>
    <ligand>
        <name>(2E)-4-hydroxy-3-methylbut-2-enyl diphosphate</name>
        <dbReference type="ChEBI" id="CHEBI:128753"/>
    </ligand>
</feature>
<feature type="binding site" evidence="1">
    <location>
        <position position="228"/>
    </location>
    <ligand>
        <name>dimethylallyl diphosphate</name>
        <dbReference type="ChEBI" id="CHEBI:57623"/>
    </ligand>
</feature>
<feature type="binding site" evidence="1">
    <location>
        <position position="228"/>
    </location>
    <ligand>
        <name>isopentenyl diphosphate</name>
        <dbReference type="ChEBI" id="CHEBI:128769"/>
    </ligand>
</feature>
<feature type="binding site" evidence="1">
    <location>
        <position position="270"/>
    </location>
    <ligand>
        <name>(2E)-4-hydroxy-3-methylbut-2-enyl diphosphate</name>
        <dbReference type="ChEBI" id="CHEBI:128753"/>
    </ligand>
</feature>
<feature type="binding site" evidence="1">
    <location>
        <position position="270"/>
    </location>
    <ligand>
        <name>dimethylallyl diphosphate</name>
        <dbReference type="ChEBI" id="CHEBI:57623"/>
    </ligand>
</feature>
<feature type="binding site" evidence="1">
    <location>
        <position position="270"/>
    </location>
    <ligand>
        <name>isopentenyl diphosphate</name>
        <dbReference type="ChEBI" id="CHEBI:128769"/>
    </ligand>
</feature>
<keyword id="KW-0004">4Fe-4S</keyword>
<keyword id="KW-0408">Iron</keyword>
<keyword id="KW-0411">Iron-sulfur</keyword>
<keyword id="KW-0414">Isoprene biosynthesis</keyword>
<keyword id="KW-0479">Metal-binding</keyword>
<keyword id="KW-0560">Oxidoreductase</keyword>
<keyword id="KW-1185">Reference proteome</keyword>
<dbReference type="EC" id="1.17.7.4" evidence="1"/>
<dbReference type="EMBL" id="CP000140">
    <property type="protein sequence ID" value="ABR45427.1"/>
    <property type="molecule type" value="Genomic_DNA"/>
</dbReference>
<dbReference type="RefSeq" id="WP_009276154.1">
    <property type="nucleotide sequence ID" value="NZ_LR215978.1"/>
</dbReference>
<dbReference type="SMR" id="A6LIB3"/>
<dbReference type="STRING" id="435591.BDI_3740"/>
<dbReference type="PaxDb" id="435591-BDI_3740"/>
<dbReference type="DNASU" id="5308889"/>
<dbReference type="KEGG" id="pdi:BDI_3740"/>
<dbReference type="eggNOG" id="COG0761">
    <property type="taxonomic scope" value="Bacteria"/>
</dbReference>
<dbReference type="HOGENOM" id="CLU_027486_0_1_10"/>
<dbReference type="BioCyc" id="PDIS435591:G1G5A-3835-MONOMER"/>
<dbReference type="UniPathway" id="UPA00056">
    <property type="reaction ID" value="UER00097"/>
</dbReference>
<dbReference type="UniPathway" id="UPA00059">
    <property type="reaction ID" value="UER00105"/>
</dbReference>
<dbReference type="Proteomes" id="UP000000566">
    <property type="component" value="Chromosome"/>
</dbReference>
<dbReference type="GO" id="GO:0051539">
    <property type="term" value="F:4 iron, 4 sulfur cluster binding"/>
    <property type="evidence" value="ECO:0007669"/>
    <property type="project" value="UniProtKB-UniRule"/>
</dbReference>
<dbReference type="GO" id="GO:0051745">
    <property type="term" value="F:4-hydroxy-3-methylbut-2-enyl diphosphate reductase activity"/>
    <property type="evidence" value="ECO:0007669"/>
    <property type="project" value="UniProtKB-UniRule"/>
</dbReference>
<dbReference type="GO" id="GO:0046872">
    <property type="term" value="F:metal ion binding"/>
    <property type="evidence" value="ECO:0007669"/>
    <property type="project" value="UniProtKB-KW"/>
</dbReference>
<dbReference type="GO" id="GO:0050992">
    <property type="term" value="P:dimethylallyl diphosphate biosynthetic process"/>
    <property type="evidence" value="ECO:0007669"/>
    <property type="project" value="UniProtKB-UniRule"/>
</dbReference>
<dbReference type="GO" id="GO:0019288">
    <property type="term" value="P:isopentenyl diphosphate biosynthetic process, methylerythritol 4-phosphate pathway"/>
    <property type="evidence" value="ECO:0007669"/>
    <property type="project" value="UniProtKB-UniRule"/>
</dbReference>
<dbReference type="GO" id="GO:0016114">
    <property type="term" value="P:terpenoid biosynthetic process"/>
    <property type="evidence" value="ECO:0007669"/>
    <property type="project" value="UniProtKB-UniRule"/>
</dbReference>
<dbReference type="CDD" id="cd13944">
    <property type="entry name" value="lytB_ispH"/>
    <property type="match status" value="1"/>
</dbReference>
<dbReference type="Gene3D" id="3.40.50.11270">
    <property type="match status" value="1"/>
</dbReference>
<dbReference type="Gene3D" id="3.40.1010.20">
    <property type="entry name" value="4-hydroxy-3-methylbut-2-enyl diphosphate reductase, catalytic domain"/>
    <property type="match status" value="2"/>
</dbReference>
<dbReference type="HAMAP" id="MF_00191">
    <property type="entry name" value="IspH"/>
    <property type="match status" value="1"/>
</dbReference>
<dbReference type="InterPro" id="IPR003451">
    <property type="entry name" value="LytB/IspH"/>
</dbReference>
<dbReference type="NCBIfam" id="TIGR00216">
    <property type="entry name" value="ispH_lytB"/>
    <property type="match status" value="1"/>
</dbReference>
<dbReference type="NCBIfam" id="NF002187">
    <property type="entry name" value="PRK01045.1-1"/>
    <property type="match status" value="1"/>
</dbReference>
<dbReference type="PANTHER" id="PTHR30426">
    <property type="entry name" value="4-HYDROXY-3-METHYLBUT-2-ENYL DIPHOSPHATE REDUCTASE"/>
    <property type="match status" value="1"/>
</dbReference>
<dbReference type="PANTHER" id="PTHR30426:SF0">
    <property type="entry name" value="4-HYDROXY-3-METHYLBUT-2-ENYL DIPHOSPHATE REDUCTASE"/>
    <property type="match status" value="1"/>
</dbReference>
<dbReference type="Pfam" id="PF02401">
    <property type="entry name" value="LYTB"/>
    <property type="match status" value="1"/>
</dbReference>
<gene>
    <name evidence="1" type="primary">ispH</name>
    <name type="ordered locus">BDI_3740</name>
</gene>
<reference key="1">
    <citation type="journal article" date="2007" name="PLoS Biol.">
        <title>Evolution of symbiotic bacteria in the distal human intestine.</title>
        <authorList>
            <person name="Xu J."/>
            <person name="Mahowald M.A."/>
            <person name="Ley R.E."/>
            <person name="Lozupone C.A."/>
            <person name="Hamady M."/>
            <person name="Martens E.C."/>
            <person name="Henrissat B."/>
            <person name="Coutinho P.M."/>
            <person name="Minx P."/>
            <person name="Latreille P."/>
            <person name="Cordum H."/>
            <person name="Van Brunt A."/>
            <person name="Kim K."/>
            <person name="Fulton R.S."/>
            <person name="Fulton L.A."/>
            <person name="Clifton S.W."/>
            <person name="Wilson R.K."/>
            <person name="Knight R.D."/>
            <person name="Gordon J.I."/>
        </authorList>
    </citation>
    <scope>NUCLEOTIDE SEQUENCE [LARGE SCALE GENOMIC DNA]</scope>
    <source>
        <strain>ATCC 8503 / DSM 20701 / CIP 104284 / JCM 5825 / NCTC 11152</strain>
    </source>
</reference>